<gene>
    <name type="ORF">CG13364</name>
</gene>
<name>TMA7_DROME</name>
<keyword id="KW-0175">Coiled coil</keyword>
<keyword id="KW-1185">Reference proteome</keyword>
<feature type="chain" id="PRO_0000291655" description="Translation machinery-associated protein 7 homolog">
    <location>
        <begin position="1"/>
        <end position="64"/>
    </location>
</feature>
<feature type="region of interest" description="Disordered" evidence="2">
    <location>
        <begin position="1"/>
        <end position="64"/>
    </location>
</feature>
<feature type="coiled-coil region" evidence="1">
    <location>
        <begin position="27"/>
        <end position="50"/>
    </location>
</feature>
<feature type="compositionally biased region" description="Basic and acidic residues" evidence="2">
    <location>
        <begin position="27"/>
        <end position="38"/>
    </location>
</feature>
<feature type="compositionally biased region" description="Low complexity" evidence="2">
    <location>
        <begin position="39"/>
        <end position="50"/>
    </location>
</feature>
<feature type="compositionally biased region" description="Gly residues" evidence="2">
    <location>
        <begin position="53"/>
        <end position="64"/>
    </location>
</feature>
<evidence type="ECO:0000255" key="1"/>
<evidence type="ECO:0000256" key="2">
    <source>
        <dbReference type="SAM" id="MobiDB-lite"/>
    </source>
</evidence>
<accession>Q9XZS3</accession>
<protein>
    <recommendedName>
        <fullName>Translation machinery-associated protein 7 homolog</fullName>
    </recommendedName>
    <alternativeName>
        <fullName>Coiled-coil domain-containing protein 72 homolog</fullName>
    </alternativeName>
</protein>
<reference key="1">
    <citation type="journal article" date="2000" name="Science">
        <title>The genome sequence of Drosophila melanogaster.</title>
        <authorList>
            <person name="Adams M.D."/>
            <person name="Celniker S.E."/>
            <person name="Holt R.A."/>
            <person name="Evans C.A."/>
            <person name="Gocayne J.D."/>
            <person name="Amanatides P.G."/>
            <person name="Scherer S.E."/>
            <person name="Li P.W."/>
            <person name="Hoskins R.A."/>
            <person name="Galle R.F."/>
            <person name="George R.A."/>
            <person name="Lewis S.E."/>
            <person name="Richards S."/>
            <person name="Ashburner M."/>
            <person name="Henderson S.N."/>
            <person name="Sutton G.G."/>
            <person name="Wortman J.R."/>
            <person name="Yandell M.D."/>
            <person name="Zhang Q."/>
            <person name="Chen L.X."/>
            <person name="Brandon R.C."/>
            <person name="Rogers Y.-H.C."/>
            <person name="Blazej R.G."/>
            <person name="Champe M."/>
            <person name="Pfeiffer B.D."/>
            <person name="Wan K.H."/>
            <person name="Doyle C."/>
            <person name="Baxter E.G."/>
            <person name="Helt G."/>
            <person name="Nelson C.R."/>
            <person name="Miklos G.L.G."/>
            <person name="Abril J.F."/>
            <person name="Agbayani A."/>
            <person name="An H.-J."/>
            <person name="Andrews-Pfannkoch C."/>
            <person name="Baldwin D."/>
            <person name="Ballew R.M."/>
            <person name="Basu A."/>
            <person name="Baxendale J."/>
            <person name="Bayraktaroglu L."/>
            <person name="Beasley E.M."/>
            <person name="Beeson K.Y."/>
            <person name="Benos P.V."/>
            <person name="Berman B.P."/>
            <person name="Bhandari D."/>
            <person name="Bolshakov S."/>
            <person name="Borkova D."/>
            <person name="Botchan M.R."/>
            <person name="Bouck J."/>
            <person name="Brokstein P."/>
            <person name="Brottier P."/>
            <person name="Burtis K.C."/>
            <person name="Busam D.A."/>
            <person name="Butler H."/>
            <person name="Cadieu E."/>
            <person name="Center A."/>
            <person name="Chandra I."/>
            <person name="Cherry J.M."/>
            <person name="Cawley S."/>
            <person name="Dahlke C."/>
            <person name="Davenport L.B."/>
            <person name="Davies P."/>
            <person name="de Pablos B."/>
            <person name="Delcher A."/>
            <person name="Deng Z."/>
            <person name="Mays A.D."/>
            <person name="Dew I."/>
            <person name="Dietz S.M."/>
            <person name="Dodson K."/>
            <person name="Doup L.E."/>
            <person name="Downes M."/>
            <person name="Dugan-Rocha S."/>
            <person name="Dunkov B.C."/>
            <person name="Dunn P."/>
            <person name="Durbin K.J."/>
            <person name="Evangelista C.C."/>
            <person name="Ferraz C."/>
            <person name="Ferriera S."/>
            <person name="Fleischmann W."/>
            <person name="Fosler C."/>
            <person name="Gabrielian A.E."/>
            <person name="Garg N.S."/>
            <person name="Gelbart W.M."/>
            <person name="Glasser K."/>
            <person name="Glodek A."/>
            <person name="Gong F."/>
            <person name="Gorrell J.H."/>
            <person name="Gu Z."/>
            <person name="Guan P."/>
            <person name="Harris M."/>
            <person name="Harris N.L."/>
            <person name="Harvey D.A."/>
            <person name="Heiman T.J."/>
            <person name="Hernandez J.R."/>
            <person name="Houck J."/>
            <person name="Hostin D."/>
            <person name="Houston K.A."/>
            <person name="Howland T.J."/>
            <person name="Wei M.-H."/>
            <person name="Ibegwam C."/>
            <person name="Jalali M."/>
            <person name="Kalush F."/>
            <person name="Karpen G.H."/>
            <person name="Ke Z."/>
            <person name="Kennison J.A."/>
            <person name="Ketchum K.A."/>
            <person name="Kimmel B.E."/>
            <person name="Kodira C.D."/>
            <person name="Kraft C.L."/>
            <person name="Kravitz S."/>
            <person name="Kulp D."/>
            <person name="Lai Z."/>
            <person name="Lasko P."/>
            <person name="Lei Y."/>
            <person name="Levitsky A.A."/>
            <person name="Li J.H."/>
            <person name="Li Z."/>
            <person name="Liang Y."/>
            <person name="Lin X."/>
            <person name="Liu X."/>
            <person name="Mattei B."/>
            <person name="McIntosh T.C."/>
            <person name="McLeod M.P."/>
            <person name="McPherson D."/>
            <person name="Merkulov G."/>
            <person name="Milshina N.V."/>
            <person name="Mobarry C."/>
            <person name="Morris J."/>
            <person name="Moshrefi A."/>
            <person name="Mount S.M."/>
            <person name="Moy M."/>
            <person name="Murphy B."/>
            <person name="Murphy L."/>
            <person name="Muzny D.M."/>
            <person name="Nelson D.L."/>
            <person name="Nelson D.R."/>
            <person name="Nelson K.A."/>
            <person name="Nixon K."/>
            <person name="Nusskern D.R."/>
            <person name="Pacleb J.M."/>
            <person name="Palazzolo M."/>
            <person name="Pittman G.S."/>
            <person name="Pan S."/>
            <person name="Pollard J."/>
            <person name="Puri V."/>
            <person name="Reese M.G."/>
            <person name="Reinert K."/>
            <person name="Remington K."/>
            <person name="Saunders R.D.C."/>
            <person name="Scheeler F."/>
            <person name="Shen H."/>
            <person name="Shue B.C."/>
            <person name="Siden-Kiamos I."/>
            <person name="Simpson M."/>
            <person name="Skupski M.P."/>
            <person name="Smith T.J."/>
            <person name="Spier E."/>
            <person name="Spradling A.C."/>
            <person name="Stapleton M."/>
            <person name="Strong R."/>
            <person name="Sun E."/>
            <person name="Svirskas R."/>
            <person name="Tector C."/>
            <person name="Turner R."/>
            <person name="Venter E."/>
            <person name="Wang A.H."/>
            <person name="Wang X."/>
            <person name="Wang Z.-Y."/>
            <person name="Wassarman D.A."/>
            <person name="Weinstock G.M."/>
            <person name="Weissenbach J."/>
            <person name="Williams S.M."/>
            <person name="Woodage T."/>
            <person name="Worley K.C."/>
            <person name="Wu D."/>
            <person name="Yang S."/>
            <person name="Yao Q.A."/>
            <person name="Ye J."/>
            <person name="Yeh R.-F."/>
            <person name="Zaveri J.S."/>
            <person name="Zhan M."/>
            <person name="Zhang G."/>
            <person name="Zhao Q."/>
            <person name="Zheng L."/>
            <person name="Zheng X.H."/>
            <person name="Zhong F.N."/>
            <person name="Zhong W."/>
            <person name="Zhou X."/>
            <person name="Zhu S.C."/>
            <person name="Zhu X."/>
            <person name="Smith H.O."/>
            <person name="Gibbs R.A."/>
            <person name="Myers E.W."/>
            <person name="Rubin G.M."/>
            <person name="Venter J.C."/>
        </authorList>
    </citation>
    <scope>NUCLEOTIDE SEQUENCE [LARGE SCALE GENOMIC DNA]</scope>
    <source>
        <strain>Berkeley</strain>
    </source>
</reference>
<reference key="2">
    <citation type="journal article" date="2002" name="Genome Biol.">
        <title>Annotation of the Drosophila melanogaster euchromatic genome: a systematic review.</title>
        <authorList>
            <person name="Misra S."/>
            <person name="Crosby M.A."/>
            <person name="Mungall C.J."/>
            <person name="Matthews B.B."/>
            <person name="Campbell K.S."/>
            <person name="Hradecky P."/>
            <person name="Huang Y."/>
            <person name="Kaminker J.S."/>
            <person name="Millburn G.H."/>
            <person name="Prochnik S.E."/>
            <person name="Smith C.D."/>
            <person name="Tupy J.L."/>
            <person name="Whitfield E.J."/>
            <person name="Bayraktaroglu L."/>
            <person name="Berman B.P."/>
            <person name="Bettencourt B.R."/>
            <person name="Celniker S.E."/>
            <person name="de Grey A.D.N.J."/>
            <person name="Drysdale R.A."/>
            <person name="Harris N.L."/>
            <person name="Richter J."/>
            <person name="Russo S."/>
            <person name="Schroeder A.J."/>
            <person name="Shu S.Q."/>
            <person name="Stapleton M."/>
            <person name="Yamada C."/>
            <person name="Ashburner M."/>
            <person name="Gelbart W.M."/>
            <person name="Rubin G.M."/>
            <person name="Lewis S.E."/>
        </authorList>
    </citation>
    <scope>GENOME REANNOTATION</scope>
    <source>
        <strain>Berkeley</strain>
    </source>
</reference>
<reference key="3">
    <citation type="journal article" date="2000" name="Science">
        <title>From sequence to chromosome: the tip of the X chromosome of D. melanogaster.</title>
        <authorList>
            <person name="Benos P.V."/>
            <person name="Gatt M.K."/>
            <person name="Ashburner M."/>
            <person name="Murphy L."/>
            <person name="Harris D."/>
            <person name="Barrell B.G."/>
            <person name="Ferraz C."/>
            <person name="Vidal S."/>
            <person name="Brun C."/>
            <person name="Demailles J."/>
            <person name="Cadieu E."/>
            <person name="Dreano S."/>
            <person name="Gloux S."/>
            <person name="Lelaure V."/>
            <person name="Mottier S."/>
            <person name="Galibert F."/>
            <person name="Borkova D."/>
            <person name="Minana B."/>
            <person name="Kafatos F.C."/>
            <person name="Louis C."/>
            <person name="Siden-Kiamos I."/>
            <person name="Bolshakov S."/>
            <person name="Papagiannakis G."/>
            <person name="Spanos L."/>
            <person name="Cox S."/>
            <person name="Madueno E."/>
            <person name="de Pablos B."/>
            <person name="Modolell J."/>
            <person name="Peter A."/>
            <person name="Schoettler P."/>
            <person name="Werner M."/>
            <person name="Mourkioti F."/>
            <person name="Beinert N."/>
            <person name="Dowe G."/>
            <person name="Schaefer U."/>
            <person name="Jaeckle H."/>
            <person name="Bucheton A."/>
            <person name="Callister D.M."/>
            <person name="Campbell L.A."/>
            <person name="Darlamitsou A."/>
            <person name="Henderson N.S."/>
            <person name="McMillan P.J."/>
            <person name="Salles C."/>
            <person name="Tait E.A."/>
            <person name="Valenti P."/>
            <person name="Saunders R.D.C."/>
            <person name="Glover D.M."/>
        </authorList>
    </citation>
    <scope>NUCLEOTIDE SEQUENCE [LARGE SCALE GENOMIC DNA]</scope>
    <source>
        <strain>Oregon-R</strain>
    </source>
</reference>
<reference key="4">
    <citation type="submission" date="2004-02" db="EMBL/GenBank/DDBJ databases">
        <authorList>
            <person name="Stapleton M."/>
            <person name="Carlson J.W."/>
            <person name="Chavez C."/>
            <person name="Frise E."/>
            <person name="George R.A."/>
            <person name="Pacleb J.M."/>
            <person name="Park S."/>
            <person name="Wan K.H."/>
            <person name="Yu C."/>
            <person name="Rubin G.M."/>
            <person name="Celniker S.E."/>
        </authorList>
    </citation>
    <scope>NUCLEOTIDE SEQUENCE [LARGE SCALE MRNA]</scope>
    <source>
        <strain>Berkeley</strain>
    </source>
</reference>
<sequence>MSGREGGKKKPLKAPKKDSKDLDEDDMAFKQKQKEQQKALEAAKANASKKGPLVGGGIKKSGKK</sequence>
<proteinExistence type="predicted"/>
<organism>
    <name type="scientific">Drosophila melanogaster</name>
    <name type="common">Fruit fly</name>
    <dbReference type="NCBI Taxonomy" id="7227"/>
    <lineage>
        <taxon>Eukaryota</taxon>
        <taxon>Metazoa</taxon>
        <taxon>Ecdysozoa</taxon>
        <taxon>Arthropoda</taxon>
        <taxon>Hexapoda</taxon>
        <taxon>Insecta</taxon>
        <taxon>Pterygota</taxon>
        <taxon>Neoptera</taxon>
        <taxon>Endopterygota</taxon>
        <taxon>Diptera</taxon>
        <taxon>Brachycera</taxon>
        <taxon>Muscomorpha</taxon>
        <taxon>Ephydroidea</taxon>
        <taxon>Drosophilidae</taxon>
        <taxon>Drosophila</taxon>
        <taxon>Sophophora</taxon>
    </lineage>
</organism>
<dbReference type="EMBL" id="AE014298">
    <property type="protein sequence ID" value="AAF45528.1"/>
    <property type="molecule type" value="Genomic_DNA"/>
</dbReference>
<dbReference type="EMBL" id="AL031581">
    <property type="protein sequence ID" value="CAB41345.1"/>
    <property type="molecule type" value="Genomic_DNA"/>
</dbReference>
<dbReference type="EMBL" id="BT011542">
    <property type="protein sequence ID" value="AAS15678.1"/>
    <property type="molecule type" value="mRNA"/>
</dbReference>
<dbReference type="PIR" id="T13381">
    <property type="entry name" value="T13381"/>
</dbReference>
<dbReference type="RefSeq" id="NP_652500.1">
    <property type="nucleotide sequence ID" value="NM_144243.2"/>
</dbReference>
<dbReference type="FunCoup" id="Q9XZS3">
    <property type="interactions" value="990"/>
</dbReference>
<dbReference type="STRING" id="7227.FBpp0070154"/>
<dbReference type="PaxDb" id="7227-FBpp0070154"/>
<dbReference type="DNASU" id="50364"/>
<dbReference type="EnsemblMetazoa" id="FBtr0070159">
    <property type="protein sequence ID" value="FBpp0070154"/>
    <property type="gene ID" value="FBgn0026879"/>
</dbReference>
<dbReference type="GeneID" id="50364"/>
<dbReference type="KEGG" id="dme:Dmel_CG13364"/>
<dbReference type="UCSC" id="CG13364-RA">
    <property type="organism name" value="d. melanogaster"/>
</dbReference>
<dbReference type="AGR" id="FB:FBgn0026879"/>
<dbReference type="FlyBase" id="FBgn0026879">
    <property type="gene designation" value="CG13364"/>
</dbReference>
<dbReference type="VEuPathDB" id="VectorBase:FBgn0026879"/>
<dbReference type="eggNOG" id="KOG4766">
    <property type="taxonomic scope" value="Eukaryota"/>
</dbReference>
<dbReference type="GeneTree" id="ENSGT00940000176379"/>
<dbReference type="HOGENOM" id="CLU_184661_2_0_1"/>
<dbReference type="InParanoid" id="Q9XZS3"/>
<dbReference type="OMA" id="CFANCIY"/>
<dbReference type="BioGRID-ORCS" id="50364">
    <property type="hits" value="0 hits in 1 CRISPR screen"/>
</dbReference>
<dbReference type="GenomeRNAi" id="50364"/>
<dbReference type="PRO" id="PR:Q9XZS3"/>
<dbReference type="Proteomes" id="UP000000803">
    <property type="component" value="Chromosome X"/>
</dbReference>
<dbReference type="Bgee" id="FBgn0026879">
    <property type="expression patterns" value="Expressed in adult class III enteroendocrine cell in adult midgut (Drosophila) and 246 other cell types or tissues"/>
</dbReference>
<dbReference type="InterPro" id="IPR015157">
    <property type="entry name" value="TMA7"/>
</dbReference>
<dbReference type="PANTHER" id="PTHR28632">
    <property type="entry name" value="TRANSLATION MACHINERY-ASSOCIATED PROTEIN 7"/>
    <property type="match status" value="1"/>
</dbReference>
<dbReference type="Pfam" id="PF09072">
    <property type="entry name" value="TMA7"/>
    <property type="match status" value="1"/>
</dbReference>